<dbReference type="EC" id="2.3.1.234" evidence="1"/>
<dbReference type="EMBL" id="BA000037">
    <property type="protein sequence ID" value="BAC93329.1"/>
    <property type="molecule type" value="Genomic_DNA"/>
</dbReference>
<dbReference type="RefSeq" id="WP_011078711.1">
    <property type="nucleotide sequence ID" value="NC_005139.1"/>
</dbReference>
<dbReference type="SMR" id="Q7MNZ9"/>
<dbReference type="STRING" id="672.VV93_v1c05070"/>
<dbReference type="GeneID" id="93894938"/>
<dbReference type="KEGG" id="vvy:VV0565"/>
<dbReference type="eggNOG" id="COG0533">
    <property type="taxonomic scope" value="Bacteria"/>
</dbReference>
<dbReference type="HOGENOM" id="CLU_023208_0_0_6"/>
<dbReference type="Proteomes" id="UP000002675">
    <property type="component" value="Chromosome I"/>
</dbReference>
<dbReference type="GO" id="GO:0005737">
    <property type="term" value="C:cytoplasm"/>
    <property type="evidence" value="ECO:0007669"/>
    <property type="project" value="UniProtKB-SubCell"/>
</dbReference>
<dbReference type="GO" id="GO:0005506">
    <property type="term" value="F:iron ion binding"/>
    <property type="evidence" value="ECO:0007669"/>
    <property type="project" value="UniProtKB-UniRule"/>
</dbReference>
<dbReference type="GO" id="GO:0061711">
    <property type="term" value="F:N(6)-L-threonylcarbamoyladenine synthase activity"/>
    <property type="evidence" value="ECO:0007669"/>
    <property type="project" value="UniProtKB-EC"/>
</dbReference>
<dbReference type="GO" id="GO:0002949">
    <property type="term" value="P:tRNA threonylcarbamoyladenosine modification"/>
    <property type="evidence" value="ECO:0007669"/>
    <property type="project" value="UniProtKB-UniRule"/>
</dbReference>
<dbReference type="CDD" id="cd24133">
    <property type="entry name" value="ASKHA_NBD_TsaD_bac"/>
    <property type="match status" value="1"/>
</dbReference>
<dbReference type="FunFam" id="3.30.420.40:FF:000031">
    <property type="entry name" value="tRNA N6-adenosine threonylcarbamoyltransferase"/>
    <property type="match status" value="1"/>
</dbReference>
<dbReference type="Gene3D" id="3.30.420.40">
    <property type="match status" value="2"/>
</dbReference>
<dbReference type="HAMAP" id="MF_01445">
    <property type="entry name" value="TsaD"/>
    <property type="match status" value="1"/>
</dbReference>
<dbReference type="InterPro" id="IPR043129">
    <property type="entry name" value="ATPase_NBD"/>
</dbReference>
<dbReference type="InterPro" id="IPR000905">
    <property type="entry name" value="Gcp-like_dom"/>
</dbReference>
<dbReference type="InterPro" id="IPR017861">
    <property type="entry name" value="KAE1/TsaD"/>
</dbReference>
<dbReference type="InterPro" id="IPR017860">
    <property type="entry name" value="Peptidase_M22_CS"/>
</dbReference>
<dbReference type="InterPro" id="IPR022450">
    <property type="entry name" value="TsaD"/>
</dbReference>
<dbReference type="NCBIfam" id="TIGR00329">
    <property type="entry name" value="gcp_kae1"/>
    <property type="match status" value="1"/>
</dbReference>
<dbReference type="NCBIfam" id="TIGR03723">
    <property type="entry name" value="T6A_TsaD_YgjD"/>
    <property type="match status" value="1"/>
</dbReference>
<dbReference type="PANTHER" id="PTHR11735">
    <property type="entry name" value="TRNA N6-ADENOSINE THREONYLCARBAMOYLTRANSFERASE"/>
    <property type="match status" value="1"/>
</dbReference>
<dbReference type="PANTHER" id="PTHR11735:SF6">
    <property type="entry name" value="TRNA N6-ADENOSINE THREONYLCARBAMOYLTRANSFERASE, MITOCHONDRIAL"/>
    <property type="match status" value="1"/>
</dbReference>
<dbReference type="Pfam" id="PF00814">
    <property type="entry name" value="TsaD"/>
    <property type="match status" value="1"/>
</dbReference>
<dbReference type="PRINTS" id="PR00789">
    <property type="entry name" value="OSIALOPTASE"/>
</dbReference>
<dbReference type="SUPFAM" id="SSF53067">
    <property type="entry name" value="Actin-like ATPase domain"/>
    <property type="match status" value="1"/>
</dbReference>
<dbReference type="PROSITE" id="PS01016">
    <property type="entry name" value="GLYCOPROTEASE"/>
    <property type="match status" value="1"/>
</dbReference>
<comment type="function">
    <text evidence="1">Required for the formation of a threonylcarbamoyl group on adenosine at position 37 (t(6)A37) in tRNAs that read codons beginning with adenine. Is involved in the transfer of the threonylcarbamoyl moiety of threonylcarbamoyl-AMP (TC-AMP) to the N6 group of A37, together with TsaE and TsaB. TsaD likely plays a direct catalytic role in this reaction.</text>
</comment>
<comment type="catalytic activity">
    <reaction evidence="1">
        <text>L-threonylcarbamoyladenylate + adenosine(37) in tRNA = N(6)-L-threonylcarbamoyladenosine(37) in tRNA + AMP + H(+)</text>
        <dbReference type="Rhea" id="RHEA:37059"/>
        <dbReference type="Rhea" id="RHEA-COMP:10162"/>
        <dbReference type="Rhea" id="RHEA-COMP:10163"/>
        <dbReference type="ChEBI" id="CHEBI:15378"/>
        <dbReference type="ChEBI" id="CHEBI:73682"/>
        <dbReference type="ChEBI" id="CHEBI:74411"/>
        <dbReference type="ChEBI" id="CHEBI:74418"/>
        <dbReference type="ChEBI" id="CHEBI:456215"/>
        <dbReference type="EC" id="2.3.1.234"/>
    </reaction>
</comment>
<comment type="cofactor">
    <cofactor evidence="1">
        <name>Fe(2+)</name>
        <dbReference type="ChEBI" id="CHEBI:29033"/>
    </cofactor>
    <text evidence="1">Binds 1 Fe(2+) ion per subunit.</text>
</comment>
<comment type="subcellular location">
    <subcellularLocation>
        <location evidence="1">Cytoplasm</location>
    </subcellularLocation>
</comment>
<comment type="similarity">
    <text evidence="1">Belongs to the KAE1 / TsaD family.</text>
</comment>
<feature type="chain" id="PRO_0000303610" description="tRNA N6-adenosine threonylcarbamoyltransferase">
    <location>
        <begin position="1"/>
        <end position="339"/>
    </location>
</feature>
<feature type="binding site" evidence="1">
    <location>
        <position position="111"/>
    </location>
    <ligand>
        <name>Fe cation</name>
        <dbReference type="ChEBI" id="CHEBI:24875"/>
    </ligand>
</feature>
<feature type="binding site" evidence="1">
    <location>
        <position position="115"/>
    </location>
    <ligand>
        <name>Fe cation</name>
        <dbReference type="ChEBI" id="CHEBI:24875"/>
    </ligand>
</feature>
<feature type="binding site" evidence="1">
    <location>
        <begin position="134"/>
        <end position="138"/>
    </location>
    <ligand>
        <name>substrate</name>
    </ligand>
</feature>
<feature type="binding site" evidence="1">
    <location>
        <position position="167"/>
    </location>
    <ligand>
        <name>substrate</name>
    </ligand>
</feature>
<feature type="binding site" evidence="1">
    <location>
        <position position="180"/>
    </location>
    <ligand>
        <name>substrate</name>
    </ligand>
</feature>
<feature type="binding site" evidence="1">
    <location>
        <position position="272"/>
    </location>
    <ligand>
        <name>substrate</name>
    </ligand>
</feature>
<feature type="binding site" evidence="1">
    <location>
        <position position="300"/>
    </location>
    <ligand>
        <name>Fe cation</name>
        <dbReference type="ChEBI" id="CHEBI:24875"/>
    </ligand>
</feature>
<accession>Q7MNZ9</accession>
<keyword id="KW-0012">Acyltransferase</keyword>
<keyword id="KW-0963">Cytoplasm</keyword>
<keyword id="KW-0408">Iron</keyword>
<keyword id="KW-0479">Metal-binding</keyword>
<keyword id="KW-0808">Transferase</keyword>
<keyword id="KW-0819">tRNA processing</keyword>
<reference key="1">
    <citation type="journal article" date="2003" name="Genome Res.">
        <title>Comparative genome analysis of Vibrio vulnificus, a marine pathogen.</title>
        <authorList>
            <person name="Chen C.-Y."/>
            <person name="Wu K.-M."/>
            <person name="Chang Y.-C."/>
            <person name="Chang C.-H."/>
            <person name="Tsai H.-C."/>
            <person name="Liao T.-L."/>
            <person name="Liu Y.-M."/>
            <person name="Chen H.-J."/>
            <person name="Shen A.B.-T."/>
            <person name="Li J.-C."/>
            <person name="Su T.-L."/>
            <person name="Shao C.-P."/>
            <person name="Lee C.-T."/>
            <person name="Hor L.-I."/>
            <person name="Tsai S.-F."/>
        </authorList>
    </citation>
    <scope>NUCLEOTIDE SEQUENCE [LARGE SCALE GENOMIC DNA]</scope>
    <source>
        <strain>YJ016</strain>
    </source>
</reference>
<organism>
    <name type="scientific">Vibrio vulnificus (strain YJ016)</name>
    <dbReference type="NCBI Taxonomy" id="196600"/>
    <lineage>
        <taxon>Bacteria</taxon>
        <taxon>Pseudomonadati</taxon>
        <taxon>Pseudomonadota</taxon>
        <taxon>Gammaproteobacteria</taxon>
        <taxon>Vibrionales</taxon>
        <taxon>Vibrionaceae</taxon>
        <taxon>Vibrio</taxon>
    </lineage>
</organism>
<sequence length="339" mass="36449">MRILGIETSCDETGIAIYDDEKGLLAHKLYSQIKLHADYGGVVPELASRDHVKKTIPLIKEALKEANLTAKDIDGVAYTAGPGLVGALLVGATIGRSLAYAWGVPAVPVHHMEGHLLAPMLEDNPPPFPFVAVLVSGGHSMMVEVKGIGEYKILGESIDDAAGEAFDKTAKLMGLDYPGGPLLSKLAEKGTPGRFKFPRPMTNVPGLDMSFSGLKTFTANTIAANGDDEQTRADIAYAFEEAVCATLAIKCKRALEQTGMKRIVIAGGVSANRRLRAELEKLAHKVGGDVYYPRTEFCTDNGAMIAYAGMQRLKNNEVSDLAVEARPRWPIDQLTPVMK</sequence>
<gene>
    <name evidence="1" type="primary">tsaD</name>
    <name type="synonym">gcp</name>
    <name type="ordered locus">VV0565</name>
</gene>
<name>TSAD_VIBVY</name>
<proteinExistence type="inferred from homology"/>
<evidence type="ECO:0000255" key="1">
    <source>
        <dbReference type="HAMAP-Rule" id="MF_01445"/>
    </source>
</evidence>
<protein>
    <recommendedName>
        <fullName evidence="1">tRNA N6-adenosine threonylcarbamoyltransferase</fullName>
        <ecNumber evidence="1">2.3.1.234</ecNumber>
    </recommendedName>
    <alternativeName>
        <fullName evidence="1">N6-L-threonylcarbamoyladenine synthase</fullName>
        <shortName evidence="1">t(6)A synthase</shortName>
    </alternativeName>
    <alternativeName>
        <fullName evidence="1">t(6)A37 threonylcarbamoyladenosine biosynthesis protein TsaD</fullName>
    </alternativeName>
    <alternativeName>
        <fullName evidence="1">tRNA threonylcarbamoyladenosine biosynthesis protein TsaD</fullName>
    </alternativeName>
</protein>